<keyword id="KW-0002">3D-structure</keyword>
<keyword id="KW-0007">Acetylation</keyword>
<keyword id="KW-0025">Alternative splicing</keyword>
<keyword id="KW-0158">Chromosome</keyword>
<keyword id="KW-0963">Cytoplasm</keyword>
<keyword id="KW-1017">Isopeptide bond</keyword>
<keyword id="KW-0417">Keratinization</keyword>
<keyword id="KW-0539">Nucleus</keyword>
<keyword id="KW-0597">Phosphoprotein</keyword>
<keyword id="KW-1267">Proteomics identification</keyword>
<keyword id="KW-1185">Reference proteome</keyword>
<keyword id="KW-0678">Repressor</keyword>
<keyword id="KW-0804">Transcription</keyword>
<keyword id="KW-0805">Transcription regulation</keyword>
<keyword id="KW-0832">Ubl conjugation</keyword>
<feature type="chain" id="PRO_0000058537" description="Periphilin-1">
    <location>
        <begin position="1"/>
        <end position="458"/>
    </location>
</feature>
<feature type="region of interest" description="Disordered" evidence="2">
    <location>
        <begin position="1"/>
        <end position="51"/>
    </location>
</feature>
<feature type="region of interest" description="Disordered" evidence="2">
    <location>
        <begin position="63"/>
        <end position="284"/>
    </location>
</feature>
<feature type="region of interest" description="Disordered" evidence="2">
    <location>
        <begin position="345"/>
        <end position="406"/>
    </location>
</feature>
<feature type="short sequence motif" description="Nuclear localization signal" evidence="1">
    <location>
        <begin position="103"/>
        <end position="109"/>
    </location>
</feature>
<feature type="compositionally biased region" description="Basic and acidic residues" evidence="2">
    <location>
        <begin position="1"/>
        <end position="18"/>
    </location>
</feature>
<feature type="compositionally biased region" description="Basic and acidic residues" evidence="2">
    <location>
        <begin position="63"/>
        <end position="107"/>
    </location>
</feature>
<feature type="compositionally biased region" description="Basic and acidic residues" evidence="2">
    <location>
        <begin position="116"/>
        <end position="142"/>
    </location>
</feature>
<feature type="compositionally biased region" description="Low complexity" evidence="2">
    <location>
        <begin position="143"/>
        <end position="154"/>
    </location>
</feature>
<feature type="compositionally biased region" description="Basic and acidic residues" evidence="2">
    <location>
        <begin position="181"/>
        <end position="194"/>
    </location>
</feature>
<feature type="compositionally biased region" description="Low complexity" evidence="2">
    <location>
        <begin position="205"/>
        <end position="215"/>
    </location>
</feature>
<feature type="compositionally biased region" description="Basic and acidic residues" evidence="2">
    <location>
        <begin position="217"/>
        <end position="230"/>
    </location>
</feature>
<feature type="compositionally biased region" description="Basic and acidic residues" evidence="2">
    <location>
        <begin position="237"/>
        <end position="246"/>
    </location>
</feature>
<feature type="compositionally biased region" description="Pro residues" evidence="2">
    <location>
        <begin position="377"/>
        <end position="386"/>
    </location>
</feature>
<feature type="compositionally biased region" description="Basic residues" evidence="2">
    <location>
        <begin position="388"/>
        <end position="398"/>
    </location>
</feature>
<feature type="modified residue" description="Phosphoserine" evidence="25 27">
    <location>
        <position position="110"/>
    </location>
</feature>
<feature type="modified residue" description="Phosphoserine" evidence="27">
    <location>
        <position position="114"/>
    </location>
</feature>
<feature type="modified residue" description="Phosphoserine" evidence="20 21 22 23 25 26 27">
    <location>
        <position position="133"/>
    </location>
</feature>
<feature type="modified residue" description="Phosphoserine" evidence="20">
    <location>
        <position position="140"/>
    </location>
</feature>
<feature type="modified residue" description="Phosphoserine" evidence="25">
    <location>
        <position position="161"/>
    </location>
</feature>
<feature type="modified residue" description="Phosphoserine" evidence="25">
    <location>
        <position position="167"/>
    </location>
</feature>
<feature type="modified residue" description="Phosphoserine" evidence="22 27">
    <location>
        <position position="197"/>
    </location>
</feature>
<feature type="modified residue" description="Phosphoserine" evidence="27">
    <location>
        <position position="201"/>
    </location>
</feature>
<feature type="modified residue" description="Phosphoserine" evidence="19 25 26 28">
    <location>
        <position position="205"/>
    </location>
</feature>
<feature type="modified residue" description="N6-acetyllysine; alternate" evidence="24">
    <location>
        <position position="235"/>
    </location>
</feature>
<feature type="modified residue" description="N6-acetyllysine; alternate" evidence="24">
    <location>
        <position position="240"/>
    </location>
</feature>
<feature type="modified residue" description="Phosphoserine" evidence="27">
    <location>
        <position position="325"/>
    </location>
</feature>
<feature type="cross-link" description="Glycyl lysine isopeptide (Lys-Gly) (interchain with G-Cter in SUMO2)" evidence="31">
    <location>
        <position position="109"/>
    </location>
</feature>
<feature type="cross-link" description="Glycyl lysine isopeptide (Lys-Gly) (interchain with G-Cter in SUMO2)" evidence="31">
    <location>
        <position position="160"/>
    </location>
</feature>
<feature type="cross-link" description="Glycyl lysine isopeptide (Lys-Gly) (interchain with G-Cter in SUMO2)" evidence="31">
    <location>
        <position position="180"/>
    </location>
</feature>
<feature type="cross-link" description="Glycyl lysine isopeptide (Lys-Gly) (interchain with G-Cter in SUMO2)" evidence="31">
    <location>
        <position position="199"/>
    </location>
</feature>
<feature type="cross-link" description="Glycyl lysine isopeptide (Lys-Gly) (interchain with G-Cter in SUMO2)" evidence="31">
    <location>
        <position position="227"/>
    </location>
</feature>
<feature type="cross-link" description="Glycyl lysine isopeptide (Lys-Gly) (interchain with G-Cter in SUMO2); alternate" evidence="31">
    <location>
        <position position="235"/>
    </location>
</feature>
<feature type="cross-link" description="Glycyl lysine isopeptide (Lys-Gly) (interchain with G-Cter in SUMO2); alternate" evidence="29 30 31">
    <location>
        <position position="240"/>
    </location>
</feature>
<feature type="cross-link" description="Glycyl lysine isopeptide (Lys-Gly) (interchain with G-Cter in SUMO2)" evidence="31">
    <location>
        <position position="328"/>
    </location>
</feature>
<feature type="cross-link" description="Glycyl lysine isopeptide (Lys-Gly) (interchain with G-Cter in SUMO2)" evidence="29">
    <location>
        <position position="453"/>
    </location>
</feature>
<feature type="splice variant" id="VSP_009898" description="In isoform 7." evidence="12">
    <location>
        <begin position="1"/>
        <end position="184"/>
    </location>
</feature>
<feature type="splice variant" id="VSP_009899" description="In isoform 2, isoform 5 and isoform 6." evidence="9 11 14">
    <original>M</original>
    <variation>MAYRRDEM</variation>
    <location>
        <position position="1"/>
    </location>
</feature>
<feature type="splice variant" id="VSP_009900" description="In isoform 3, isoform 5 and isoform 6." evidence="9 14">
    <location>
        <begin position="25"/>
        <end position="79"/>
    </location>
</feature>
<feature type="splice variant" id="VSP_054078" description="In isoform 9." evidence="15">
    <original>RKSVRPGASYKRQNEGNPERD</original>
    <variation>RN</variation>
    <location>
        <begin position="170"/>
        <end position="190"/>
    </location>
</feature>
<feature type="splice variant" id="VSP_009902" description="In isoform 7." evidence="12">
    <original>GNPER</original>
    <variation>MFSYI</variation>
    <location>
        <begin position="185"/>
        <end position="189"/>
    </location>
</feature>
<feature type="splice variant" id="VSP_009903" description="In isoform 5 and isoform 7." evidence="12 14">
    <original>YR</original>
    <variation>RV</variation>
    <location>
        <begin position="305"/>
        <end position="306"/>
    </location>
</feature>
<feature type="splice variant" id="VSP_009904" description="In isoform 5 and isoform 7." evidence="12 14">
    <location>
        <begin position="307"/>
        <end position="458"/>
    </location>
</feature>
<feature type="splice variant" id="VSP_009905" description="In isoform 2, isoform 6, isoform 8 and isoform 9." evidence="9 11 12 15">
    <original>ESAGQTWQQVPPVRNTEMDHDGTPEN</original>
    <variation>GERCVEELKHFIAEYDTSTQDFGEPF</variation>
    <location>
        <begin position="342"/>
        <end position="367"/>
    </location>
</feature>
<feature type="splice variant" id="VSP_009906" description="In isoform 2, isoform 6, isoform 8 and isoform 9." evidence="9 11 12 15">
    <location>
        <begin position="368"/>
        <end position="458"/>
    </location>
</feature>
<feature type="splice variant" id="VSP_009907" description="In isoform 3." evidence="14">
    <original>A</original>
    <variation>ALFGFQHDASNHTIVGLGPNQVPEMKETTLQA</variation>
    <location>
        <position position="376"/>
    </location>
</feature>
<feature type="sequence variant" id="VAR_036233" description="In a breast cancer sample; somatic mutation; dbSNP:rs140585847." evidence="5">
    <original>V</original>
    <variation>M</variation>
    <location>
        <position position="173"/>
    </location>
</feature>
<feature type="sequence conflict" description="In Ref. 3; AAF36126." evidence="16" ref="3">
    <original>P</original>
    <variation>L</variation>
    <location>
        <position position="97"/>
    </location>
</feature>
<feature type="sequence conflict" description="In Ref. 2; AAO16497." evidence="16" ref="2">
    <original>S</original>
    <variation>F</variation>
    <location>
        <position position="178"/>
    </location>
</feature>
<feature type="sequence conflict" description="In Ref. 3; AAF36126." evidence="16" ref="3">
    <original>S</original>
    <variation>P</variation>
    <location>
        <position position="253"/>
    </location>
</feature>
<feature type="sequence conflict" description="In Ref. 3; AAF36126." evidence="16" ref="3">
    <original>E</original>
    <variation>K</variation>
    <location>
        <position position="283"/>
    </location>
</feature>
<feature type="helix" evidence="32">
    <location>
        <begin position="291"/>
        <end position="322"/>
    </location>
</feature>
<feature type="helix" evidence="32">
    <location>
        <begin position="326"/>
        <end position="341"/>
    </location>
</feature>
<feature type="sequence conflict" description="In Ref. 7; AAH25306." evidence="16" ref="7">
    <original>Q</original>
    <variation>P</variation>
    <location sequence="Q8NEY8-3">
        <position position="341"/>
    </location>
</feature>
<organism>
    <name type="scientific">Homo sapiens</name>
    <name type="common">Human</name>
    <dbReference type="NCBI Taxonomy" id="9606"/>
    <lineage>
        <taxon>Eukaryota</taxon>
        <taxon>Metazoa</taxon>
        <taxon>Chordata</taxon>
        <taxon>Craniata</taxon>
        <taxon>Vertebrata</taxon>
        <taxon>Euteleostomi</taxon>
        <taxon>Mammalia</taxon>
        <taxon>Eutheria</taxon>
        <taxon>Euarchontoglires</taxon>
        <taxon>Primates</taxon>
        <taxon>Haplorrhini</taxon>
        <taxon>Catarrhini</taxon>
        <taxon>Hominidae</taxon>
        <taxon>Homo</taxon>
    </lineage>
</organism>
<accession>Q8NEY8</accession>
<accession>E9PAX8</accession>
<accession>Q86YT2</accession>
<accession>Q8IXN3</accession>
<accession>Q8TB09</accession>
<accession>Q96NB9</accession>
<accession>Q9NXL4</accession>
<accession>Q9P0P6</accession>
<accession>Q9P0R9</accession>
<proteinExistence type="evidence at protein level"/>
<gene>
    <name evidence="18" type="primary">PPHLN1</name>
    <name type="ORF">HSPC206</name>
    <name type="ORF">HSPC232</name>
</gene>
<evidence type="ECO:0000255" key="1"/>
<evidence type="ECO:0000256" key="2">
    <source>
        <dbReference type="SAM" id="MobiDB-lite"/>
    </source>
</evidence>
<evidence type="ECO:0000269" key="3">
    <source>
    </source>
</evidence>
<evidence type="ECO:0000269" key="4">
    <source>
    </source>
</evidence>
<evidence type="ECO:0000269" key="5">
    <source>
    </source>
</evidence>
<evidence type="ECO:0000269" key="6">
    <source>
    </source>
</evidence>
<evidence type="ECO:0000269" key="7">
    <source>
    </source>
</evidence>
<evidence type="ECO:0000269" key="8">
    <source>
    </source>
</evidence>
<evidence type="ECO:0000303" key="9">
    <source>
    </source>
</evidence>
<evidence type="ECO:0000303" key="10">
    <source>
    </source>
</evidence>
<evidence type="ECO:0000303" key="11">
    <source>
    </source>
</evidence>
<evidence type="ECO:0000303" key="12">
    <source>
    </source>
</evidence>
<evidence type="ECO:0000303" key="13">
    <source>
    </source>
</evidence>
<evidence type="ECO:0000303" key="14">
    <source>
    </source>
</evidence>
<evidence type="ECO:0000303" key="15">
    <source ref="5"/>
</evidence>
<evidence type="ECO:0000305" key="16"/>
<evidence type="ECO:0000305" key="17">
    <source>
    </source>
</evidence>
<evidence type="ECO:0000312" key="18">
    <source>
        <dbReference type="HGNC" id="HGNC:19369"/>
    </source>
</evidence>
<evidence type="ECO:0007744" key="19">
    <source>
    </source>
</evidence>
<evidence type="ECO:0007744" key="20">
    <source>
    </source>
</evidence>
<evidence type="ECO:0007744" key="21">
    <source>
    </source>
</evidence>
<evidence type="ECO:0007744" key="22">
    <source>
    </source>
</evidence>
<evidence type="ECO:0007744" key="23">
    <source>
    </source>
</evidence>
<evidence type="ECO:0007744" key="24">
    <source>
    </source>
</evidence>
<evidence type="ECO:0007744" key="25">
    <source>
    </source>
</evidence>
<evidence type="ECO:0007744" key="26">
    <source>
    </source>
</evidence>
<evidence type="ECO:0007744" key="27">
    <source>
    </source>
</evidence>
<evidence type="ECO:0007744" key="28">
    <source>
    </source>
</evidence>
<evidence type="ECO:0007744" key="29">
    <source>
    </source>
</evidence>
<evidence type="ECO:0007744" key="30">
    <source>
    </source>
</evidence>
<evidence type="ECO:0007744" key="31">
    <source>
    </source>
</evidence>
<evidence type="ECO:0007829" key="32">
    <source>
        <dbReference type="PDB" id="6SWG"/>
    </source>
</evidence>
<name>PPHLN_HUMAN</name>
<dbReference type="EMBL" id="AY039238">
    <property type="protein sequence ID" value="AAK68657.1"/>
    <property type="molecule type" value="mRNA"/>
</dbReference>
<dbReference type="EMBL" id="AY157850">
    <property type="protein sequence ID" value="AAO16497.1"/>
    <property type="molecule type" value="mRNA"/>
</dbReference>
<dbReference type="EMBL" id="AF151040">
    <property type="protein sequence ID" value="AAF36126.1"/>
    <property type="status" value="ALT_FRAME"/>
    <property type="molecule type" value="mRNA"/>
</dbReference>
<dbReference type="EMBL" id="AF151066">
    <property type="protein sequence ID" value="AAF36152.1"/>
    <property type="status" value="ALT_FRAME"/>
    <property type="molecule type" value="mRNA"/>
</dbReference>
<dbReference type="EMBL" id="AK055690">
    <property type="protein sequence ID" value="BAB70985.1"/>
    <property type="molecule type" value="mRNA"/>
</dbReference>
<dbReference type="EMBL" id="AK000186">
    <property type="protein sequence ID" value="BAA90996.1"/>
    <property type="molecule type" value="mRNA"/>
</dbReference>
<dbReference type="EMBL" id="CR621833">
    <property type="status" value="NOT_ANNOTATED_CDS"/>
    <property type="molecule type" value="mRNA"/>
</dbReference>
<dbReference type="EMBL" id="AC020629">
    <property type="status" value="NOT_ANNOTATED_CDS"/>
    <property type="molecule type" value="Genomic_DNA"/>
</dbReference>
<dbReference type="EMBL" id="AC079601">
    <property type="status" value="NOT_ANNOTATED_CDS"/>
    <property type="molecule type" value="Genomic_DNA"/>
</dbReference>
<dbReference type="EMBL" id="AC079684">
    <property type="status" value="NOT_ANNOTATED_CDS"/>
    <property type="molecule type" value="Genomic_DNA"/>
</dbReference>
<dbReference type="EMBL" id="BC025306">
    <property type="protein sequence ID" value="AAH25306.1"/>
    <property type="status" value="ALT_INIT"/>
    <property type="molecule type" value="mRNA"/>
</dbReference>
<dbReference type="EMBL" id="BC039832">
    <property type="protein sequence ID" value="AAH39832.1"/>
    <property type="molecule type" value="mRNA"/>
</dbReference>
<dbReference type="CCDS" id="CCDS31777.1">
    <molecule id="Q8NEY8-1"/>
</dbReference>
<dbReference type="CCDS" id="CCDS41773.1">
    <molecule id="Q8NEY8-2"/>
</dbReference>
<dbReference type="CCDS" id="CCDS44860.1">
    <molecule id="Q8NEY8-3"/>
</dbReference>
<dbReference type="CCDS" id="CCDS44861.1">
    <molecule id="Q8NEY8-9"/>
</dbReference>
<dbReference type="CCDS" id="CCDS55817.1">
    <molecule id="Q8NEY8-6"/>
</dbReference>
<dbReference type="CCDS" id="CCDS8741.1">
    <molecule id="Q8NEY8-8"/>
</dbReference>
<dbReference type="RefSeq" id="NP_001137259.1">
    <molecule id="Q8NEY8-3"/>
    <property type="nucleotide sequence ID" value="NM_001143787.2"/>
</dbReference>
<dbReference type="RefSeq" id="NP_001137260.1">
    <molecule id="Q8NEY8-9"/>
    <property type="nucleotide sequence ID" value="NM_001143788.2"/>
</dbReference>
<dbReference type="RefSeq" id="NP_057572.5">
    <molecule id="Q8NEY8-1"/>
    <property type="nucleotide sequence ID" value="NM_016488.6"/>
</dbReference>
<dbReference type="RefSeq" id="NP_958846.1">
    <molecule id="Q8NEY8-5"/>
    <property type="nucleotide sequence ID" value="NM_201438.2"/>
</dbReference>
<dbReference type="RefSeq" id="NP_958847.1">
    <molecule id="Q8NEY8-8"/>
    <property type="nucleotide sequence ID" value="NM_201439.2"/>
</dbReference>
<dbReference type="RefSeq" id="NP_958848.1">
    <molecule id="Q8NEY8-6"/>
    <property type="nucleotide sequence ID" value="NM_201440.2"/>
</dbReference>
<dbReference type="RefSeq" id="NP_958923.1">
    <molecule id="Q8NEY8-2"/>
    <property type="nucleotide sequence ID" value="NM_201515.2"/>
</dbReference>
<dbReference type="PDB" id="6SWG">
    <property type="method" value="X-ray"/>
    <property type="resolution" value="2.51 A"/>
    <property type="chains" value="A/B=285-341"/>
</dbReference>
<dbReference type="PDBsum" id="6SWG"/>
<dbReference type="SMR" id="Q8NEY8"/>
<dbReference type="BioGRID" id="119596">
    <property type="interactions" value="157"/>
</dbReference>
<dbReference type="ComplexPortal" id="CPX-2348">
    <property type="entry name" value="HUSH epigenetic repressor complex"/>
</dbReference>
<dbReference type="CORUM" id="Q8NEY8"/>
<dbReference type="DIP" id="DIP-49051N"/>
<dbReference type="FunCoup" id="Q8NEY8">
    <property type="interactions" value="4565"/>
</dbReference>
<dbReference type="IntAct" id="Q8NEY8">
    <property type="interactions" value="113"/>
</dbReference>
<dbReference type="MINT" id="Q8NEY8"/>
<dbReference type="STRING" id="9606.ENSP00000378935"/>
<dbReference type="iPTMnet" id="Q8NEY8"/>
<dbReference type="PhosphoSitePlus" id="Q8NEY8"/>
<dbReference type="BioMuta" id="PPHLN1"/>
<dbReference type="DMDM" id="46396942"/>
<dbReference type="jPOST" id="Q8NEY8"/>
<dbReference type="MassIVE" id="Q8NEY8"/>
<dbReference type="PaxDb" id="9606-ENSP00000378935"/>
<dbReference type="PeptideAtlas" id="Q8NEY8"/>
<dbReference type="ProteomicsDB" id="19102"/>
<dbReference type="ProteomicsDB" id="73240">
    <molecule id="Q8NEY8-1"/>
</dbReference>
<dbReference type="ProteomicsDB" id="73241">
    <molecule id="Q8NEY8-2"/>
</dbReference>
<dbReference type="ProteomicsDB" id="73242">
    <molecule id="Q8NEY8-3"/>
</dbReference>
<dbReference type="ProteomicsDB" id="73243">
    <molecule id="Q8NEY8-5"/>
</dbReference>
<dbReference type="ProteomicsDB" id="73244">
    <molecule id="Q8NEY8-6"/>
</dbReference>
<dbReference type="ProteomicsDB" id="73245">
    <molecule id="Q8NEY8-7"/>
</dbReference>
<dbReference type="ProteomicsDB" id="73246">
    <molecule id="Q8NEY8-8"/>
</dbReference>
<dbReference type="Pumba" id="Q8NEY8"/>
<dbReference type="Antibodypedia" id="25050">
    <property type="antibodies" value="150 antibodies from 28 providers"/>
</dbReference>
<dbReference type="DNASU" id="51535"/>
<dbReference type="Ensembl" id="ENST00000358314.12">
    <molecule id="Q8NEY8-8"/>
    <property type="protein sequence ID" value="ENSP00000351066.7"/>
    <property type="gene ID" value="ENSG00000134283.18"/>
</dbReference>
<dbReference type="Ensembl" id="ENST00000395568.6">
    <molecule id="Q8NEY8-1"/>
    <property type="protein sequence ID" value="ENSP00000378935.2"/>
    <property type="gene ID" value="ENSG00000134283.18"/>
</dbReference>
<dbReference type="Ensembl" id="ENST00000395580.7">
    <molecule id="Q8NEY8-2"/>
    <property type="protein sequence ID" value="ENSP00000378947.3"/>
    <property type="gene ID" value="ENSG00000134283.18"/>
</dbReference>
<dbReference type="Ensembl" id="ENST00000432191.6">
    <molecule id="Q8NEY8-3"/>
    <property type="protein sequence ID" value="ENSP00000393965.2"/>
    <property type="gene ID" value="ENSG00000134283.18"/>
</dbReference>
<dbReference type="Ensembl" id="ENST00000449194.6">
    <molecule id="Q8NEY8-9"/>
    <property type="protein sequence ID" value="ENSP00000390681.2"/>
    <property type="gene ID" value="ENSG00000134283.18"/>
</dbReference>
<dbReference type="Ensembl" id="ENST00000552761.5">
    <molecule id="Q8NEY8-6"/>
    <property type="protein sequence ID" value="ENSP00000449331.1"/>
    <property type="gene ID" value="ENSG00000134283.18"/>
</dbReference>
<dbReference type="Ensembl" id="ENST00000610488.4">
    <molecule id="Q8NEY8-1"/>
    <property type="protein sequence ID" value="ENSP00000479913.1"/>
    <property type="gene ID" value="ENSG00000134283.18"/>
</dbReference>
<dbReference type="Ensembl" id="ENST00000613154.4">
    <molecule id="Q8NEY8-9"/>
    <property type="protein sequence ID" value="ENSP00000478872.1"/>
    <property type="gene ID" value="ENSG00000134283.18"/>
</dbReference>
<dbReference type="Ensembl" id="ENST00000619544.4">
    <molecule id="Q8NEY8-3"/>
    <property type="protein sequence ID" value="ENSP00000477681.1"/>
    <property type="gene ID" value="ENSG00000134283.18"/>
</dbReference>
<dbReference type="GeneID" id="51535"/>
<dbReference type="KEGG" id="hsa:51535"/>
<dbReference type="MANE-Select" id="ENST00000358314.12">
    <molecule id="Q8NEY8-8"/>
    <property type="protein sequence ID" value="ENSP00000351066.7"/>
    <property type="RefSeq nucleotide sequence ID" value="NM_201439.2"/>
    <property type="RefSeq protein sequence ID" value="NP_958847.1"/>
</dbReference>
<dbReference type="UCSC" id="uc001rnb.4">
    <molecule id="Q8NEY8-1"/>
    <property type="organism name" value="human"/>
</dbReference>
<dbReference type="AGR" id="HGNC:19369"/>
<dbReference type="CTD" id="51535"/>
<dbReference type="DisGeNET" id="51535"/>
<dbReference type="GeneCards" id="PPHLN1"/>
<dbReference type="HGNC" id="HGNC:19369">
    <property type="gene designation" value="PPHLN1"/>
</dbReference>
<dbReference type="HPA" id="ENSG00000134283">
    <property type="expression patterns" value="Low tissue specificity"/>
</dbReference>
<dbReference type="MIM" id="608150">
    <property type="type" value="gene"/>
</dbReference>
<dbReference type="neXtProt" id="NX_Q8NEY8"/>
<dbReference type="OpenTargets" id="ENSG00000134283"/>
<dbReference type="PharmGKB" id="PA134881011"/>
<dbReference type="VEuPathDB" id="HostDB:ENSG00000134283"/>
<dbReference type="eggNOG" id="ENOG502QW3I">
    <property type="taxonomic scope" value="Eukaryota"/>
</dbReference>
<dbReference type="GeneTree" id="ENSGT00390000016228"/>
<dbReference type="HOGENOM" id="CLU_051689_1_0_1"/>
<dbReference type="InParanoid" id="Q8NEY8"/>
<dbReference type="OrthoDB" id="8933311at2759"/>
<dbReference type="PAN-GO" id="Q8NEY8">
    <property type="GO annotations" value="3 GO annotations based on evolutionary models"/>
</dbReference>
<dbReference type="PhylomeDB" id="Q8NEY8"/>
<dbReference type="TreeFam" id="TF335813"/>
<dbReference type="PathwayCommons" id="Q8NEY8"/>
<dbReference type="Reactome" id="R-HSA-9843970">
    <property type="pathway name" value="Regulation of endogenous retroelements by the Human Silencing Hub (HUSH) complex"/>
</dbReference>
<dbReference type="SignaLink" id="Q8NEY8"/>
<dbReference type="BioGRID-ORCS" id="51535">
    <property type="hits" value="55 hits in 1164 CRISPR screens"/>
</dbReference>
<dbReference type="ChiTaRS" id="PPHLN1">
    <property type="organism name" value="human"/>
</dbReference>
<dbReference type="GeneWiki" id="PPHLN1"/>
<dbReference type="GenomeRNAi" id="51535"/>
<dbReference type="Pharos" id="Q8NEY8">
    <property type="development level" value="Tbio"/>
</dbReference>
<dbReference type="PRO" id="PR:Q8NEY8"/>
<dbReference type="Proteomes" id="UP000005640">
    <property type="component" value="Chromosome 12"/>
</dbReference>
<dbReference type="RNAct" id="Q8NEY8">
    <property type="molecule type" value="protein"/>
</dbReference>
<dbReference type="Bgee" id="ENSG00000134283">
    <property type="expression patterns" value="Expressed in pancreatic ductal cell and 194 other cell types or tissues"/>
</dbReference>
<dbReference type="ExpressionAtlas" id="Q8NEY8">
    <property type="expression patterns" value="baseline and differential"/>
</dbReference>
<dbReference type="GO" id="GO:0005694">
    <property type="term" value="C:chromosome"/>
    <property type="evidence" value="ECO:0007669"/>
    <property type="project" value="UniProtKB-SubCell"/>
</dbReference>
<dbReference type="GO" id="GO:0005829">
    <property type="term" value="C:cytosol"/>
    <property type="evidence" value="ECO:0000314"/>
    <property type="project" value="HPA"/>
</dbReference>
<dbReference type="GO" id="GO:0005794">
    <property type="term" value="C:Golgi apparatus"/>
    <property type="evidence" value="ECO:0000314"/>
    <property type="project" value="HPA"/>
</dbReference>
<dbReference type="GO" id="GO:0005654">
    <property type="term" value="C:nucleoplasm"/>
    <property type="evidence" value="ECO:0000314"/>
    <property type="project" value="HPA"/>
</dbReference>
<dbReference type="GO" id="GO:0003723">
    <property type="term" value="F:RNA binding"/>
    <property type="evidence" value="ECO:0007005"/>
    <property type="project" value="UniProtKB"/>
</dbReference>
<dbReference type="GO" id="GO:0140719">
    <property type="term" value="P:constitutive heterochromatin formation"/>
    <property type="evidence" value="ECO:0000314"/>
    <property type="project" value="UniProtKB"/>
</dbReference>
<dbReference type="GO" id="GO:0031424">
    <property type="term" value="P:keratinization"/>
    <property type="evidence" value="ECO:0007669"/>
    <property type="project" value="UniProtKB-KW"/>
</dbReference>
<dbReference type="GO" id="GO:0045892">
    <property type="term" value="P:negative regulation of DNA-templated transcription"/>
    <property type="evidence" value="ECO:0007669"/>
    <property type="project" value="InterPro"/>
</dbReference>
<dbReference type="GO" id="GO:0045814">
    <property type="term" value="P:negative regulation of gene expression, epigenetic"/>
    <property type="evidence" value="ECO:0000314"/>
    <property type="project" value="UniProtKB"/>
</dbReference>
<dbReference type="GO" id="GO:0097355">
    <property type="term" value="P:protein localization to heterochromatin"/>
    <property type="evidence" value="ECO:0000314"/>
    <property type="project" value="UniProtKB"/>
</dbReference>
<dbReference type="CDD" id="cd22896">
    <property type="entry name" value="periphilin-like"/>
    <property type="match status" value="1"/>
</dbReference>
<dbReference type="InterPro" id="IPR028851">
    <property type="entry name" value="Pphln1"/>
</dbReference>
<dbReference type="PANTHER" id="PTHR15836">
    <property type="entry name" value="PERIPHILIN 1"/>
    <property type="match status" value="1"/>
</dbReference>
<dbReference type="PANTHER" id="PTHR15836:SF4">
    <property type="entry name" value="PERIPHILIN-1"/>
    <property type="match status" value="1"/>
</dbReference>
<dbReference type="Pfam" id="PF25234">
    <property type="entry name" value="Periphilin_C"/>
    <property type="match status" value="1"/>
</dbReference>
<sequence>MWSEGRYEYERIPRERAPPRSHPSDGYNRLVNIVPKKPPLLDRPGEGSYNRYYSHVDYRDYDEGRSFSHDRRSGPPHRGDESGYRWTRDDHSASRQPEYRDMRDGFRRKSFYSSHYARERSPYKRDNTFFRESPVGRKDSPHSRSGSSVSSRSYSPERSKSYSFHQSQHRKSVRPGASYKRQNEGNPERDKERPVQSLKTSRDTSPSSGSAVSSSKVLDKPSRLTEKELAEAASKWAAEKLEKSDESNLPEISEYEAGSTAPLFTDQPEEPESNTTHGIELFEDSQLTTRSKAIASKTKEIEQVYRQDCETFGMVVKMLIEKDPSLEKSIQFALRQNLHEIESAGQTWQQVPPVRNTEMDHDGTPENEGEETAQSAPQPPQAPQPLQPRKKRVRRTTQLRRTTGAPDITWGMLKKTTQEAERILLRTQTPFTPENLFLAMLSVVHCNSRKDVKPENKQ</sequence>
<comment type="function">
    <text evidence="4 6 7 8 17">Component of the HUSH complex, a multiprotein complex that mediates epigenetic repression. The HUSH complex is recruited to genomic loci rich in H3K9me3 and is probably required to maintain transcriptional silencing by promoting recruitment of SETDB1, a histone methyltransferase that mediates further deposition of H3K9me3. In the HUSH complex, contributes to the maintenance of the complex at chromatin (PubMed:26022416). Acts as a transcriptional corepressor and regulates the cell cycle, probably via the HUSH complex (PubMed:15474462, PubMed:17963697). The HUSH complex is also involved in the silencing of unintegrated retroviral DNA: some part of the retroviral DNA formed immediately after infection remains unintegrated in the host genome and is transcriptionally repressed (PubMed:30487602). May be involved in epithelial differentiation by contributing to epidermal integrity and barrier formation (PubMed:12853457).</text>
</comment>
<comment type="subunit">
    <text evidence="3 6 7">Homodimer (PubMed:12853457). Component of the HUSH complex; at least composed of TASOR, PPHLN1 and MPHOSPH8 (PubMed:26022416). Interacts with SIN3A and HDAC1 (PubMed:17963697). May interact with PPL (PubMed:12853457).</text>
</comment>
<comment type="interaction">
    <interactant intactId="EBI-474076">
        <id>Q8NEY8</id>
    </interactant>
    <interactant intactId="EBI-2808286">
        <id>Q2TAC2</id>
        <label>CCDC57</label>
    </interactant>
    <organismsDiffer>false</organismsDiffer>
    <experiments>3</experiments>
</comment>
<comment type="interaction">
    <interactant intactId="EBI-474076">
        <id>Q8NEY8</id>
    </interactant>
    <interactant intactId="EBI-742948">
        <id>Q5JR59</id>
        <label>MTUS2</label>
    </interactant>
    <organismsDiffer>false</organismsDiffer>
    <experiments>3</experiments>
</comment>
<comment type="interaction">
    <interactant intactId="EBI-474076">
        <id>Q8NEY8</id>
    </interactant>
    <interactant intactId="EBI-744794">
        <id>Q9BZW7</id>
        <label>TSGA10</label>
    </interactant>
    <organismsDiffer>false</organismsDiffer>
    <experiments>3</experiments>
</comment>
<comment type="interaction">
    <interactant intactId="EBI-22734102">
        <id>Q8NEY8-5</id>
    </interactant>
    <interactant intactId="EBI-11022345">
        <id>P51114-2</id>
        <label>FXR1</label>
    </interactant>
    <organismsDiffer>false</organismsDiffer>
    <experiments>3</experiments>
</comment>
<comment type="subcellular location">
    <subcellularLocation>
        <location evidence="3 4 7">Nucleus</location>
    </subcellularLocation>
    <subcellularLocation>
        <location evidence="3">Cytoplasm</location>
    </subcellularLocation>
    <subcellularLocation>
        <location evidence="7">Chromosome</location>
    </subcellularLocation>
    <text evidence="3 7">In undifferentiated keratinocytes expressed in speckle-type nuclear granules and at the nuclear membrane, but in the differentiated keratinocytes colocalized with periplakin at the cell periphery and at cell-cell junctions (PubMed:12853457). Localizes to chromatin (PubMed:26022416).</text>
</comment>
<comment type="alternative products">
    <event type="alternative splicing"/>
    <isoform>
        <id>Q8NEY8-1</id>
        <name>1</name>
        <sequence type="displayed"/>
    </isoform>
    <isoform>
        <id>Q8NEY8-2</id>
        <name>2</name>
        <name evidence="13">CR</name>
        <sequence type="described" ref="VSP_009899 VSP_009905 VSP_009906"/>
    </isoform>
    <isoform>
        <id>Q8NEY8-3</id>
        <name>3</name>
        <sequence type="described" ref="VSP_009900 VSP_009907"/>
    </isoform>
    <isoform>
        <id>Q8NEY8-5</id>
        <name>5</name>
        <sequence type="described" ref="VSP_009899 VSP_009900 VSP_009903 VSP_009904"/>
    </isoform>
    <isoform>
        <id>Q8NEY8-6</id>
        <name>6</name>
        <name evidence="13">CR-S</name>
        <sequence type="described" ref="VSP_009899 VSP_009900 VSP_009905 VSP_009906"/>
    </isoform>
    <isoform>
        <id>Q8NEY8-7</id>
        <name>7</name>
        <sequence type="described" ref="VSP_009898 VSP_009902 VSP_009903 VSP_009904"/>
    </isoform>
    <isoform>
        <id>Q8NEY8-8</id>
        <name>8</name>
        <sequence type="described" ref="VSP_009905 VSP_009906"/>
    </isoform>
    <isoform>
        <id>Q8NEY8-9</id>
        <name>9</name>
        <sequence type="described" ref="VSP_054078 VSP_009905 VSP_009906"/>
    </isoform>
</comment>
<comment type="tissue specificity">
    <text evidence="3">Ubiquitous.</text>
</comment>
<comment type="PTM">
    <text evidence="3">Substrate of transglutaminase (in vitro).</text>
</comment>
<comment type="miscellaneous">
    <molecule>Isoform 5</molecule>
    <text evidence="16">May be due to intron retention.</text>
</comment>
<comment type="miscellaneous">
    <molecule>Isoform 7</molecule>
    <text evidence="16">May be due to intron retention.</text>
</comment>
<comment type="sequence caution" evidence="16">
    <conflict type="erroneous initiation">
        <sequence resource="EMBL-CDS" id="AAH25306"/>
    </conflict>
</comment>
<comment type="sequence caution" evidence="16">
    <molecule>Isoform 6</molecule>
    <conflict type="frameshift">
        <sequence resource="EMBL-CDS" id="AAF36126"/>
    </conflict>
</comment>
<comment type="sequence caution" evidence="16">
    <molecule>Isoform 6</molecule>
    <conflict type="frameshift">
        <sequence resource="EMBL-CDS" id="AAF36152"/>
    </conflict>
</comment>
<protein>
    <recommendedName>
        <fullName evidence="11">Periphilin-1</fullName>
    </recommendedName>
    <alternativeName>
        <fullName evidence="13">CDC7 expression repressor</fullName>
        <shortName evidence="13">CR</shortName>
    </alternativeName>
    <alternativeName>
        <fullName evidence="10">Gastric cancer antigen Ga50</fullName>
    </alternativeName>
</protein>
<reference key="1">
    <citation type="journal article" date="2002" name="Br. J. Cancer">
        <title>Serological identification and expression analysis of gastric cancer-associated genes.</title>
        <authorList>
            <person name="Line A."/>
            <person name="Stengrevics A."/>
            <person name="Slucka Z."/>
            <person name="Li G."/>
            <person name="Jankevics E."/>
            <person name="Rees R.C."/>
        </authorList>
    </citation>
    <scope>NUCLEOTIDE SEQUENCE [MRNA] (ISOFORM 1)</scope>
    <source>
        <tissue>Gastric adenocarcinoma</tissue>
    </source>
</reference>
<reference key="2">
    <citation type="journal article" date="2003" name="J. Biol. Chem.">
        <title>Characterization of periphilin, a widespread, highly insoluble nuclear protein and potential constituent of the keratinocyte cornified envelope.</title>
        <authorList>
            <person name="Kazerounian S."/>
            <person name="Aho S."/>
        </authorList>
    </citation>
    <scope>NUCLEOTIDE SEQUENCE [MRNA] (ISOFORM 2)</scope>
    <scope>ALTERNATIVE SPLICING</scope>
    <scope>HOMODIMERIZATION</scope>
    <scope>INTERACTION WITH PPL</scope>
    <scope>TISSUE SPECIFICITY</scope>
    <scope>SUBCELLULAR LOCATION</scope>
    <source>
        <tissue>Keratinocyte</tissue>
    </source>
</reference>
<reference key="3">
    <citation type="journal article" date="2000" name="Genome Res.">
        <title>Cloning and functional analysis of cDNAs with open reading frames for 300 previously undefined genes expressed in CD34+ hematopoietic stem/progenitor cells.</title>
        <authorList>
            <person name="Zhang Q.-H."/>
            <person name="Ye M."/>
            <person name="Wu X.-Y."/>
            <person name="Ren S.-X."/>
            <person name="Zhao M."/>
            <person name="Zhao C.-J."/>
            <person name="Fu G."/>
            <person name="Shen Y."/>
            <person name="Fan H.-Y."/>
            <person name="Lu G."/>
            <person name="Zhong M."/>
            <person name="Xu X.-R."/>
            <person name="Han Z.-G."/>
            <person name="Zhang J.-W."/>
            <person name="Tao J."/>
            <person name="Huang Q.-H."/>
            <person name="Zhou J."/>
            <person name="Hu G.-X."/>
            <person name="Gu J."/>
            <person name="Chen S.-J."/>
            <person name="Chen Z."/>
        </authorList>
    </citation>
    <scope>NUCLEOTIDE SEQUENCE [LARGE SCALE MRNA] (ISOFORM 6)</scope>
    <source>
        <tissue>Umbilical cord blood</tissue>
    </source>
</reference>
<reference key="4">
    <citation type="journal article" date="2004" name="Nat. Genet.">
        <title>Complete sequencing and characterization of 21,243 full-length human cDNAs.</title>
        <authorList>
            <person name="Ota T."/>
            <person name="Suzuki Y."/>
            <person name="Nishikawa T."/>
            <person name="Otsuki T."/>
            <person name="Sugiyama T."/>
            <person name="Irie R."/>
            <person name="Wakamatsu A."/>
            <person name="Hayashi K."/>
            <person name="Sato H."/>
            <person name="Nagai K."/>
            <person name="Kimura K."/>
            <person name="Makita H."/>
            <person name="Sekine M."/>
            <person name="Obayashi M."/>
            <person name="Nishi T."/>
            <person name="Shibahara T."/>
            <person name="Tanaka T."/>
            <person name="Ishii S."/>
            <person name="Yamamoto J."/>
            <person name="Saito K."/>
            <person name="Kawai Y."/>
            <person name="Isono Y."/>
            <person name="Nakamura Y."/>
            <person name="Nagahari K."/>
            <person name="Murakami K."/>
            <person name="Yasuda T."/>
            <person name="Iwayanagi T."/>
            <person name="Wagatsuma M."/>
            <person name="Shiratori A."/>
            <person name="Sudo H."/>
            <person name="Hosoiri T."/>
            <person name="Kaku Y."/>
            <person name="Kodaira H."/>
            <person name="Kondo H."/>
            <person name="Sugawara M."/>
            <person name="Takahashi M."/>
            <person name="Kanda K."/>
            <person name="Yokoi T."/>
            <person name="Furuya T."/>
            <person name="Kikkawa E."/>
            <person name="Omura Y."/>
            <person name="Abe K."/>
            <person name="Kamihara K."/>
            <person name="Katsuta N."/>
            <person name="Sato K."/>
            <person name="Tanikawa M."/>
            <person name="Yamazaki M."/>
            <person name="Ninomiya K."/>
            <person name="Ishibashi T."/>
            <person name="Yamashita H."/>
            <person name="Murakawa K."/>
            <person name="Fujimori K."/>
            <person name="Tanai H."/>
            <person name="Kimata M."/>
            <person name="Watanabe M."/>
            <person name="Hiraoka S."/>
            <person name="Chiba Y."/>
            <person name="Ishida S."/>
            <person name="Ono Y."/>
            <person name="Takiguchi S."/>
            <person name="Watanabe S."/>
            <person name="Yosida M."/>
            <person name="Hotuta T."/>
            <person name="Kusano J."/>
            <person name="Kanehori K."/>
            <person name="Takahashi-Fujii A."/>
            <person name="Hara H."/>
            <person name="Tanase T.-O."/>
            <person name="Nomura Y."/>
            <person name="Togiya S."/>
            <person name="Komai F."/>
            <person name="Hara R."/>
            <person name="Takeuchi K."/>
            <person name="Arita M."/>
            <person name="Imose N."/>
            <person name="Musashino K."/>
            <person name="Yuuki H."/>
            <person name="Oshima A."/>
            <person name="Sasaki N."/>
            <person name="Aotsuka S."/>
            <person name="Yoshikawa Y."/>
            <person name="Matsunawa H."/>
            <person name="Ichihara T."/>
            <person name="Shiohata N."/>
            <person name="Sano S."/>
            <person name="Moriya S."/>
            <person name="Momiyama H."/>
            <person name="Satoh N."/>
            <person name="Takami S."/>
            <person name="Terashima Y."/>
            <person name="Suzuki O."/>
            <person name="Nakagawa S."/>
            <person name="Senoh A."/>
            <person name="Mizoguchi H."/>
            <person name="Goto Y."/>
            <person name="Shimizu F."/>
            <person name="Wakebe H."/>
            <person name="Hishigaki H."/>
            <person name="Watanabe T."/>
            <person name="Sugiyama A."/>
            <person name="Takemoto M."/>
            <person name="Kawakami B."/>
            <person name="Yamazaki M."/>
            <person name="Watanabe K."/>
            <person name="Kumagai A."/>
            <person name="Itakura S."/>
            <person name="Fukuzumi Y."/>
            <person name="Fujimori Y."/>
            <person name="Komiyama M."/>
            <person name="Tashiro H."/>
            <person name="Tanigami A."/>
            <person name="Fujiwara T."/>
            <person name="Ono T."/>
            <person name="Yamada K."/>
            <person name="Fujii Y."/>
            <person name="Ozaki K."/>
            <person name="Hirao M."/>
            <person name="Ohmori Y."/>
            <person name="Kawabata A."/>
            <person name="Hikiji T."/>
            <person name="Kobatake N."/>
            <person name="Inagaki H."/>
            <person name="Ikema Y."/>
            <person name="Okamoto S."/>
            <person name="Okitani R."/>
            <person name="Kawakami T."/>
            <person name="Noguchi S."/>
            <person name="Itoh T."/>
            <person name="Shigeta K."/>
            <person name="Senba T."/>
            <person name="Matsumura K."/>
            <person name="Nakajima Y."/>
            <person name="Mizuno T."/>
            <person name="Morinaga M."/>
            <person name="Sasaki M."/>
            <person name="Togashi T."/>
            <person name="Oyama M."/>
            <person name="Hata H."/>
            <person name="Watanabe M."/>
            <person name="Komatsu T."/>
            <person name="Mizushima-Sugano J."/>
            <person name="Satoh T."/>
            <person name="Shirai Y."/>
            <person name="Takahashi Y."/>
            <person name="Nakagawa K."/>
            <person name="Okumura K."/>
            <person name="Nagase T."/>
            <person name="Nomura N."/>
            <person name="Kikuchi H."/>
            <person name="Masuho Y."/>
            <person name="Yamashita R."/>
            <person name="Nakai K."/>
            <person name="Yada T."/>
            <person name="Nakamura Y."/>
            <person name="Ohara O."/>
            <person name="Isogai T."/>
            <person name="Sugano S."/>
        </authorList>
    </citation>
    <scope>NUCLEOTIDE SEQUENCE [LARGE SCALE MRNA] (ISOFORMS 7 AND 8)</scope>
    <source>
        <tissue>Colon</tissue>
    </source>
</reference>
<reference key="5">
    <citation type="submission" date="2004-07" db="EMBL/GenBank/DDBJ databases">
        <title>Full-length cDNA libraries and normalization.</title>
        <authorList>
            <person name="Li W.B."/>
            <person name="Gruber C."/>
            <person name="Jessee J."/>
            <person name="Polayes D."/>
        </authorList>
    </citation>
    <scope>NUCLEOTIDE SEQUENCE [LARGE SCALE MRNA] (ISOFORM 9)</scope>
    <source>
        <tissue>Placenta</tissue>
    </source>
</reference>
<reference key="6">
    <citation type="journal article" date="2006" name="Nature">
        <title>The finished DNA sequence of human chromosome 12.</title>
        <authorList>
            <person name="Scherer S.E."/>
            <person name="Muzny D.M."/>
            <person name="Buhay C.J."/>
            <person name="Chen R."/>
            <person name="Cree A."/>
            <person name="Ding Y."/>
            <person name="Dugan-Rocha S."/>
            <person name="Gill R."/>
            <person name="Gunaratne P."/>
            <person name="Harris R.A."/>
            <person name="Hawes A.C."/>
            <person name="Hernandez J."/>
            <person name="Hodgson A.V."/>
            <person name="Hume J."/>
            <person name="Jackson A."/>
            <person name="Khan Z.M."/>
            <person name="Kovar-Smith C."/>
            <person name="Lewis L.R."/>
            <person name="Lozado R.J."/>
            <person name="Metzker M.L."/>
            <person name="Milosavljevic A."/>
            <person name="Miner G.R."/>
            <person name="Montgomery K.T."/>
            <person name="Morgan M.B."/>
            <person name="Nazareth L.V."/>
            <person name="Scott G."/>
            <person name="Sodergren E."/>
            <person name="Song X.-Z."/>
            <person name="Steffen D."/>
            <person name="Lovering R.C."/>
            <person name="Wheeler D.A."/>
            <person name="Worley K.C."/>
            <person name="Yuan Y."/>
            <person name="Zhang Z."/>
            <person name="Adams C.Q."/>
            <person name="Ansari-Lari M.A."/>
            <person name="Ayele M."/>
            <person name="Brown M.J."/>
            <person name="Chen G."/>
            <person name="Chen Z."/>
            <person name="Clerc-Blankenburg K.P."/>
            <person name="Davis C."/>
            <person name="Delgado O."/>
            <person name="Dinh H.H."/>
            <person name="Draper H."/>
            <person name="Gonzalez-Garay M.L."/>
            <person name="Havlak P."/>
            <person name="Jackson L.R."/>
            <person name="Jacob L.S."/>
            <person name="Kelly S.H."/>
            <person name="Li L."/>
            <person name="Li Z."/>
            <person name="Liu J."/>
            <person name="Liu W."/>
            <person name="Lu J."/>
            <person name="Maheshwari M."/>
            <person name="Nguyen B.-V."/>
            <person name="Okwuonu G.O."/>
            <person name="Pasternak S."/>
            <person name="Perez L.M."/>
            <person name="Plopper F.J.H."/>
            <person name="Santibanez J."/>
            <person name="Shen H."/>
            <person name="Tabor P.E."/>
            <person name="Verduzco D."/>
            <person name="Waldron L."/>
            <person name="Wang Q."/>
            <person name="Williams G.A."/>
            <person name="Zhang J."/>
            <person name="Zhou J."/>
            <person name="Allen C.C."/>
            <person name="Amin A.G."/>
            <person name="Anyalebechi V."/>
            <person name="Bailey M."/>
            <person name="Barbaria J.A."/>
            <person name="Bimage K.E."/>
            <person name="Bryant N.P."/>
            <person name="Burch P.E."/>
            <person name="Burkett C.E."/>
            <person name="Burrell K.L."/>
            <person name="Calderon E."/>
            <person name="Cardenas V."/>
            <person name="Carter K."/>
            <person name="Casias K."/>
            <person name="Cavazos I."/>
            <person name="Cavazos S.R."/>
            <person name="Ceasar H."/>
            <person name="Chacko J."/>
            <person name="Chan S.N."/>
            <person name="Chavez D."/>
            <person name="Christopoulos C."/>
            <person name="Chu J."/>
            <person name="Cockrell R."/>
            <person name="Cox C.D."/>
            <person name="Dang M."/>
            <person name="Dathorne S.R."/>
            <person name="David R."/>
            <person name="Davis C.M."/>
            <person name="Davy-Carroll L."/>
            <person name="Deshazo D.R."/>
            <person name="Donlin J.E."/>
            <person name="D'Souza L."/>
            <person name="Eaves K.A."/>
            <person name="Egan A."/>
            <person name="Emery-Cohen A.J."/>
            <person name="Escotto M."/>
            <person name="Flagg N."/>
            <person name="Forbes L.D."/>
            <person name="Gabisi A.M."/>
            <person name="Garza M."/>
            <person name="Hamilton C."/>
            <person name="Henderson N."/>
            <person name="Hernandez O."/>
            <person name="Hines S."/>
            <person name="Hogues M.E."/>
            <person name="Huang M."/>
            <person name="Idlebird D.G."/>
            <person name="Johnson R."/>
            <person name="Jolivet A."/>
            <person name="Jones S."/>
            <person name="Kagan R."/>
            <person name="King L.M."/>
            <person name="Leal B."/>
            <person name="Lebow H."/>
            <person name="Lee S."/>
            <person name="LeVan J.M."/>
            <person name="Lewis L.C."/>
            <person name="London P."/>
            <person name="Lorensuhewa L.M."/>
            <person name="Loulseged H."/>
            <person name="Lovett D.A."/>
            <person name="Lucier A."/>
            <person name="Lucier R.L."/>
            <person name="Ma J."/>
            <person name="Madu R.C."/>
            <person name="Mapua P."/>
            <person name="Martindale A.D."/>
            <person name="Martinez E."/>
            <person name="Massey E."/>
            <person name="Mawhiney S."/>
            <person name="Meador M.G."/>
            <person name="Mendez S."/>
            <person name="Mercado C."/>
            <person name="Mercado I.C."/>
            <person name="Merritt C.E."/>
            <person name="Miner Z.L."/>
            <person name="Minja E."/>
            <person name="Mitchell T."/>
            <person name="Mohabbat F."/>
            <person name="Mohabbat K."/>
            <person name="Montgomery B."/>
            <person name="Moore N."/>
            <person name="Morris S."/>
            <person name="Munidasa M."/>
            <person name="Ngo R.N."/>
            <person name="Nguyen N.B."/>
            <person name="Nickerson E."/>
            <person name="Nwaokelemeh O.O."/>
            <person name="Nwokenkwo S."/>
            <person name="Obregon M."/>
            <person name="Oguh M."/>
            <person name="Oragunye N."/>
            <person name="Oviedo R.J."/>
            <person name="Parish B.J."/>
            <person name="Parker D.N."/>
            <person name="Parrish J."/>
            <person name="Parks K.L."/>
            <person name="Paul H.A."/>
            <person name="Payton B.A."/>
            <person name="Perez A."/>
            <person name="Perrin W."/>
            <person name="Pickens A."/>
            <person name="Primus E.L."/>
            <person name="Pu L.-L."/>
            <person name="Puazo M."/>
            <person name="Quiles M.M."/>
            <person name="Quiroz J.B."/>
            <person name="Rabata D."/>
            <person name="Reeves K."/>
            <person name="Ruiz S.J."/>
            <person name="Shao H."/>
            <person name="Sisson I."/>
            <person name="Sonaike T."/>
            <person name="Sorelle R.P."/>
            <person name="Sutton A.E."/>
            <person name="Svatek A.F."/>
            <person name="Svetz L.A."/>
            <person name="Tamerisa K.S."/>
            <person name="Taylor T.R."/>
            <person name="Teague B."/>
            <person name="Thomas N."/>
            <person name="Thorn R.D."/>
            <person name="Trejos Z.Y."/>
            <person name="Trevino B.K."/>
            <person name="Ukegbu O.N."/>
            <person name="Urban J.B."/>
            <person name="Vasquez L.I."/>
            <person name="Vera V.A."/>
            <person name="Villasana D.M."/>
            <person name="Wang L."/>
            <person name="Ward-Moore S."/>
            <person name="Warren J.T."/>
            <person name="Wei X."/>
            <person name="White F."/>
            <person name="Williamson A.L."/>
            <person name="Wleczyk R."/>
            <person name="Wooden H.S."/>
            <person name="Wooden S.H."/>
            <person name="Yen J."/>
            <person name="Yoon L."/>
            <person name="Yoon V."/>
            <person name="Zorrilla S.E."/>
            <person name="Nelson D."/>
            <person name="Kucherlapati R."/>
            <person name="Weinstock G."/>
            <person name="Gibbs R.A."/>
        </authorList>
    </citation>
    <scope>NUCLEOTIDE SEQUENCE [LARGE SCALE GENOMIC DNA]</scope>
</reference>
<reference key="7">
    <citation type="journal article" date="2004" name="Genome Res.">
        <title>The status, quality, and expansion of the NIH full-length cDNA project: the Mammalian Gene Collection (MGC).</title>
        <authorList>
            <consortium name="The MGC Project Team"/>
        </authorList>
    </citation>
    <scope>NUCLEOTIDE SEQUENCE [LARGE SCALE MRNA] (ISOFORMS 3 AND 5)</scope>
    <source>
        <tissue>Brain</tissue>
        <tissue>Skin</tissue>
    </source>
</reference>
<reference key="8">
    <citation type="journal article" date="2004" name="Biochem. Biophys. Res. Commun.">
        <title>Overexpression of CR/periphilin downregulates Cdc7 expression and induces S-phase arrest.</title>
        <authorList>
            <person name="Kurita M."/>
            <person name="Suzuki H."/>
            <person name="Masai H."/>
            <person name="Mizumoto K."/>
            <person name="Ogata E."/>
            <person name="Nishimoto I."/>
            <person name="Aiso S."/>
            <person name="Matsuoka M."/>
        </authorList>
    </citation>
    <scope>FUNCTION</scope>
    <scope>SUBCELLULAR LOCATION</scope>
</reference>
<reference key="9">
    <citation type="journal article" date="2006" name="Cell">
        <title>Global, in vivo, and site-specific phosphorylation dynamics in signaling networks.</title>
        <authorList>
            <person name="Olsen J.V."/>
            <person name="Blagoev B."/>
            <person name="Gnad F."/>
            <person name="Macek B."/>
            <person name="Kumar C."/>
            <person name="Mortensen P."/>
            <person name="Mann M."/>
        </authorList>
    </citation>
    <scope>PHOSPHORYLATION [LARGE SCALE ANALYSIS] AT SER-133 AND SER-140</scope>
    <scope>IDENTIFICATION BY MASS SPECTROMETRY [LARGE SCALE ANALYSIS]</scope>
    <source>
        <tissue>Cervix carcinoma</tissue>
    </source>
</reference>
<reference key="10">
    <citation type="journal article" date="2006" name="Nat. Biotechnol.">
        <title>A probability-based approach for high-throughput protein phosphorylation analysis and site localization.</title>
        <authorList>
            <person name="Beausoleil S.A."/>
            <person name="Villen J."/>
            <person name="Gerber S.A."/>
            <person name="Rush J."/>
            <person name="Gygi S.P."/>
        </authorList>
    </citation>
    <scope>PHOSPHORYLATION [LARGE SCALE ANALYSIS] AT SER-205</scope>
    <scope>IDENTIFICATION BY MASS SPECTROMETRY [LARGE SCALE ANALYSIS]</scope>
    <source>
        <tissue>Cervix carcinoma</tissue>
    </source>
</reference>
<reference key="11">
    <citation type="journal article" date="2007" name="Biochem. Biophys. Res. Commun.">
        <title>CR/periphilin is a transcriptional co-repressor involved in cell cycle progression.</title>
        <authorList>
            <person name="Kurita M."/>
            <person name="Suzuki H."/>
            <person name="Kawano Y."/>
            <person name="Aiso S."/>
            <person name="Matsuoka M."/>
        </authorList>
    </citation>
    <scope>FUNCTION</scope>
    <scope>INTERACTION WITH SIN3A AND HDAC1</scope>
</reference>
<reference key="12">
    <citation type="journal article" date="2007" name="J. Proteome Res.">
        <title>Improved titanium dioxide enrichment of phosphopeptides from HeLa cells and high confident phosphopeptide identification by cross-validation of MS/MS and MS/MS/MS spectra.</title>
        <authorList>
            <person name="Yu L.R."/>
            <person name="Zhu Z."/>
            <person name="Chan K.C."/>
            <person name="Issaq H.J."/>
            <person name="Dimitrov D.S."/>
            <person name="Veenstra T.D."/>
        </authorList>
    </citation>
    <scope>PHOSPHORYLATION [LARGE SCALE ANALYSIS] AT SER-133</scope>
    <scope>IDENTIFICATION BY MASS SPECTROMETRY [LARGE SCALE ANALYSIS]</scope>
    <source>
        <tissue>Cervix carcinoma</tissue>
    </source>
</reference>
<reference key="13">
    <citation type="journal article" date="2008" name="Mol. Cell">
        <title>Kinase-selective enrichment enables quantitative phosphoproteomics of the kinome across the cell cycle.</title>
        <authorList>
            <person name="Daub H."/>
            <person name="Olsen J.V."/>
            <person name="Bairlein M."/>
            <person name="Gnad F."/>
            <person name="Oppermann F.S."/>
            <person name="Korner R."/>
            <person name="Greff Z."/>
            <person name="Keri G."/>
            <person name="Stemmann O."/>
            <person name="Mann M."/>
        </authorList>
    </citation>
    <scope>PHOSPHORYLATION [LARGE SCALE ANALYSIS] AT SER-133</scope>
    <scope>IDENTIFICATION BY MASS SPECTROMETRY [LARGE SCALE ANALYSIS]</scope>
    <source>
        <tissue>Cervix carcinoma</tissue>
    </source>
</reference>
<reference key="14">
    <citation type="journal article" date="2008" name="Proc. Natl. Acad. Sci. U.S.A.">
        <title>A quantitative atlas of mitotic phosphorylation.</title>
        <authorList>
            <person name="Dephoure N."/>
            <person name="Zhou C."/>
            <person name="Villen J."/>
            <person name="Beausoleil S.A."/>
            <person name="Bakalarski C.E."/>
            <person name="Elledge S.J."/>
            <person name="Gygi S.P."/>
        </authorList>
    </citation>
    <scope>PHOSPHORYLATION [LARGE SCALE ANALYSIS] AT SER-133 AND SER-197</scope>
    <scope>IDENTIFICATION BY MASS SPECTROMETRY [LARGE SCALE ANALYSIS]</scope>
    <source>
        <tissue>Cervix carcinoma</tissue>
    </source>
</reference>
<reference key="15">
    <citation type="journal article" date="2009" name="Anal. Chem.">
        <title>Lys-N and trypsin cover complementary parts of the phosphoproteome in a refined SCX-based approach.</title>
        <authorList>
            <person name="Gauci S."/>
            <person name="Helbig A.O."/>
            <person name="Slijper M."/>
            <person name="Krijgsveld J."/>
            <person name="Heck A.J."/>
            <person name="Mohammed S."/>
        </authorList>
    </citation>
    <scope>IDENTIFICATION BY MASS SPECTROMETRY [LARGE SCALE ANALYSIS]</scope>
</reference>
<reference key="16">
    <citation type="journal article" date="2009" name="Science">
        <title>Lysine acetylation targets protein complexes and co-regulates major cellular functions.</title>
        <authorList>
            <person name="Choudhary C."/>
            <person name="Kumar C."/>
            <person name="Gnad F."/>
            <person name="Nielsen M.L."/>
            <person name="Rehman M."/>
            <person name="Walther T.C."/>
            <person name="Olsen J.V."/>
            <person name="Mann M."/>
        </authorList>
    </citation>
    <scope>ACETYLATION [LARGE SCALE ANALYSIS] AT LYS-235 AND LYS-240</scope>
    <scope>IDENTIFICATION BY MASS SPECTROMETRY [LARGE SCALE ANALYSIS]</scope>
</reference>
<reference key="17">
    <citation type="journal article" date="2010" name="Sci. Signal.">
        <title>Quantitative phosphoproteomics reveals widespread full phosphorylation site occupancy during mitosis.</title>
        <authorList>
            <person name="Olsen J.V."/>
            <person name="Vermeulen M."/>
            <person name="Santamaria A."/>
            <person name="Kumar C."/>
            <person name="Miller M.L."/>
            <person name="Jensen L.J."/>
            <person name="Gnad F."/>
            <person name="Cox J."/>
            <person name="Jensen T.S."/>
            <person name="Nigg E.A."/>
            <person name="Brunak S."/>
            <person name="Mann M."/>
        </authorList>
    </citation>
    <scope>PHOSPHORYLATION [LARGE SCALE ANALYSIS] AT SER-110; SER-133; SER-161; SER-167 AND SER-205</scope>
    <scope>IDENTIFICATION BY MASS SPECTROMETRY [LARGE SCALE ANALYSIS]</scope>
    <source>
        <tissue>Cervix carcinoma</tissue>
    </source>
</reference>
<reference key="18">
    <citation type="journal article" date="2011" name="Sci. Signal.">
        <title>System-wide temporal characterization of the proteome and phosphoproteome of human embryonic stem cell differentiation.</title>
        <authorList>
            <person name="Rigbolt K.T."/>
            <person name="Prokhorova T.A."/>
            <person name="Akimov V."/>
            <person name="Henningsen J."/>
            <person name="Johansen P.T."/>
            <person name="Kratchmarova I."/>
            <person name="Kassem M."/>
            <person name="Mann M."/>
            <person name="Olsen J.V."/>
            <person name="Blagoev B."/>
        </authorList>
    </citation>
    <scope>PHOSPHORYLATION [LARGE SCALE ANALYSIS] AT SER-133 AND SER-205</scope>
    <scope>IDENTIFICATION BY MASS SPECTROMETRY [LARGE SCALE ANALYSIS]</scope>
</reference>
<reference key="19">
    <citation type="journal article" date="2013" name="J. Proteome Res.">
        <title>Toward a comprehensive characterization of a human cancer cell phosphoproteome.</title>
        <authorList>
            <person name="Zhou H."/>
            <person name="Di Palma S."/>
            <person name="Preisinger C."/>
            <person name="Peng M."/>
            <person name="Polat A.N."/>
            <person name="Heck A.J."/>
            <person name="Mohammed S."/>
        </authorList>
    </citation>
    <scope>PHOSPHORYLATION [LARGE SCALE ANALYSIS] AT SER-110; SER-114; SER-133; SER-197; SER-201 AND SER-325</scope>
    <scope>IDENTIFICATION BY MASS SPECTROMETRY [LARGE SCALE ANALYSIS]</scope>
    <source>
        <tissue>Cervix carcinoma</tissue>
        <tissue>Erythroleukemia</tissue>
    </source>
</reference>
<reference key="20">
    <citation type="journal article" date="2014" name="J. Proteomics">
        <title>An enzyme assisted RP-RPLC approach for in-depth analysis of human liver phosphoproteome.</title>
        <authorList>
            <person name="Bian Y."/>
            <person name="Song C."/>
            <person name="Cheng K."/>
            <person name="Dong M."/>
            <person name="Wang F."/>
            <person name="Huang J."/>
            <person name="Sun D."/>
            <person name="Wang L."/>
            <person name="Ye M."/>
            <person name="Zou H."/>
        </authorList>
    </citation>
    <scope>PHOSPHORYLATION [LARGE SCALE ANALYSIS] AT SER-205</scope>
    <scope>IDENTIFICATION BY MASS SPECTROMETRY [LARGE SCALE ANALYSIS]</scope>
    <source>
        <tissue>Liver</tissue>
    </source>
</reference>
<reference key="21">
    <citation type="journal article" date="2014" name="Nat. Struct. Mol. Biol.">
        <title>Uncovering global SUMOylation signaling networks in a site-specific manner.</title>
        <authorList>
            <person name="Hendriks I.A."/>
            <person name="D'Souza R.C."/>
            <person name="Yang B."/>
            <person name="Verlaan-de Vries M."/>
            <person name="Mann M."/>
            <person name="Vertegaal A.C."/>
        </authorList>
    </citation>
    <scope>SUMOYLATION [LARGE SCALE ANALYSIS] AT LYS-240 AND LYS-453</scope>
    <scope>IDENTIFICATION BY MASS SPECTROMETRY [LARGE SCALE ANALYSIS]</scope>
</reference>
<reference key="22">
    <citation type="journal article" date="2015" name="Mol. Cell. Proteomics">
        <title>System-wide analysis of SUMOylation dynamics in response to replication stress reveals novel small ubiquitin-like modified target proteins and acceptor lysines relevant for genome stability.</title>
        <authorList>
            <person name="Xiao Z."/>
            <person name="Chang J.G."/>
            <person name="Hendriks I.A."/>
            <person name="Sigurdsson J.O."/>
            <person name="Olsen J.V."/>
            <person name="Vertegaal A.C."/>
        </authorList>
    </citation>
    <scope>SUMOYLATION [LARGE SCALE ANALYSIS] AT LYS-240</scope>
    <scope>IDENTIFICATION BY MASS SPECTROMETRY [LARGE SCALE ANALYSIS]</scope>
</reference>
<reference key="23">
    <citation type="journal article" date="2015" name="Science">
        <title>Epigenetic silencing by the HUSH complex mediates position-effect variegation in human cells.</title>
        <authorList>
            <person name="Tchasovnikarova I.A."/>
            <person name="Timms R.T."/>
            <person name="Matheson N.J."/>
            <person name="Wals K."/>
            <person name="Antrobus R."/>
            <person name="Goettgens B."/>
            <person name="Dougan G."/>
            <person name="Dawson M.A."/>
            <person name="Lehner P.J."/>
        </authorList>
    </citation>
    <scope>FUNCTION</scope>
    <scope>SUBCELLULAR LOCATION</scope>
    <scope>IDENTIFICATION IN THE HUSH COMPLEX</scope>
</reference>
<reference key="24">
    <citation type="journal article" date="2017" name="Nat. Struct. Mol. Biol.">
        <title>Site-specific mapping of the human SUMO proteome reveals co-modification with phosphorylation.</title>
        <authorList>
            <person name="Hendriks I.A."/>
            <person name="Lyon D."/>
            <person name="Young C."/>
            <person name="Jensen L.J."/>
            <person name="Vertegaal A.C."/>
            <person name="Nielsen M.L."/>
        </authorList>
    </citation>
    <scope>SUMOYLATION [LARGE SCALE ANALYSIS] AT LYS-109; LYS-160; LYS-180; LYS-199; LYS-227; LYS-235; LYS-240 AND LYS-328</scope>
    <scope>IDENTIFICATION BY MASS SPECTROMETRY [LARGE SCALE ANALYSIS]</scope>
</reference>
<reference key="25">
    <citation type="journal article" date="2018" name="Nature">
        <title>NP220 mediates silencing of unintegrated retroviral DNA.</title>
        <authorList>
            <person name="Zhu Y."/>
            <person name="Wang G.Z."/>
            <person name="Cingoez O."/>
            <person name="Goff S.P."/>
        </authorList>
    </citation>
    <scope>FUNCTION</scope>
</reference>
<reference key="26">
    <citation type="journal article" date="2006" name="Science">
        <title>The consensus coding sequences of human breast and colorectal cancers.</title>
        <authorList>
            <person name="Sjoeblom T."/>
            <person name="Jones S."/>
            <person name="Wood L.D."/>
            <person name="Parsons D.W."/>
            <person name="Lin J."/>
            <person name="Barber T.D."/>
            <person name="Mandelker D."/>
            <person name="Leary R.J."/>
            <person name="Ptak J."/>
            <person name="Silliman N."/>
            <person name="Szabo S."/>
            <person name="Buckhaults P."/>
            <person name="Farrell C."/>
            <person name="Meeh P."/>
            <person name="Markowitz S.D."/>
            <person name="Willis J."/>
            <person name="Dawson D."/>
            <person name="Willson J.K.V."/>
            <person name="Gazdar A.F."/>
            <person name="Hartigan J."/>
            <person name="Wu L."/>
            <person name="Liu C."/>
            <person name="Parmigiani G."/>
            <person name="Park B.H."/>
            <person name="Bachman K.E."/>
            <person name="Papadopoulos N."/>
            <person name="Vogelstein B."/>
            <person name="Kinzler K.W."/>
            <person name="Velculescu V.E."/>
        </authorList>
    </citation>
    <scope>VARIANT [LARGE SCALE ANALYSIS] MET-173</scope>
</reference>